<protein>
    <recommendedName>
        <fullName>Uncharacterized protein MJ0858</fullName>
    </recommendedName>
</protein>
<sequence length="113" mass="13335">MNDKNVEFVATLISILTVKEALNSEMENFVKVRAAIDKRELKDDDKVAIFNINSTTSYQVFFIDKDTNIEELKEEFKKMNVRINYDSEQVLKRYIERLRIQNNSKPISNNNKQ</sequence>
<organism>
    <name type="scientific">Methanocaldococcus jannaschii (strain ATCC 43067 / DSM 2661 / JAL-1 / JCM 10045 / NBRC 100440)</name>
    <name type="common">Methanococcus jannaschii</name>
    <dbReference type="NCBI Taxonomy" id="243232"/>
    <lineage>
        <taxon>Archaea</taxon>
        <taxon>Methanobacteriati</taxon>
        <taxon>Methanobacteriota</taxon>
        <taxon>Methanomada group</taxon>
        <taxon>Methanococci</taxon>
        <taxon>Methanococcales</taxon>
        <taxon>Methanocaldococcaceae</taxon>
        <taxon>Methanocaldococcus</taxon>
    </lineage>
</organism>
<gene>
    <name type="ordered locus">MJ0858</name>
</gene>
<feature type="chain" id="PRO_0000107083" description="Uncharacterized protein MJ0858">
    <location>
        <begin position="1"/>
        <end position="113"/>
    </location>
</feature>
<dbReference type="EMBL" id="L77117">
    <property type="protein sequence ID" value="AAB98864.1"/>
    <property type="molecule type" value="Genomic_DNA"/>
</dbReference>
<dbReference type="PIR" id="B64407">
    <property type="entry name" value="B64407"/>
</dbReference>
<dbReference type="RefSeq" id="WP_010870373.1">
    <property type="nucleotide sequence ID" value="NC_000909.1"/>
</dbReference>
<dbReference type="SMR" id="Q58268"/>
<dbReference type="STRING" id="243232.MJ_0858"/>
<dbReference type="PaxDb" id="243232-MJ_0858"/>
<dbReference type="EnsemblBacteria" id="AAB98864">
    <property type="protein sequence ID" value="AAB98864"/>
    <property type="gene ID" value="MJ_0858"/>
</dbReference>
<dbReference type="GeneID" id="1451747"/>
<dbReference type="KEGG" id="mja:MJ_0858"/>
<dbReference type="eggNOG" id="arCOG04905">
    <property type="taxonomic scope" value="Archaea"/>
</dbReference>
<dbReference type="HOGENOM" id="CLU_160441_0_0_2"/>
<dbReference type="InParanoid" id="Q58268"/>
<dbReference type="OrthoDB" id="80045at2157"/>
<dbReference type="Proteomes" id="UP000000805">
    <property type="component" value="Chromosome"/>
</dbReference>
<dbReference type="Gene3D" id="3.30.160.120">
    <property type="entry name" value="Hypothetical protein MTH1880"/>
    <property type="match status" value="1"/>
</dbReference>
<dbReference type="InterPro" id="IPR008032">
    <property type="entry name" value="DUF749"/>
</dbReference>
<dbReference type="InterPro" id="IPR035933">
    <property type="entry name" value="MTH1880"/>
</dbReference>
<dbReference type="InterPro" id="IPR016458">
    <property type="entry name" value="UCP005648_Ca-bd"/>
</dbReference>
<dbReference type="Pfam" id="PF05370">
    <property type="entry name" value="DUF749"/>
    <property type="match status" value="1"/>
</dbReference>
<dbReference type="PIRSF" id="PIRSF005648">
    <property type="entry name" value="UCP005648_Ca-bd"/>
    <property type="match status" value="1"/>
</dbReference>
<dbReference type="SUPFAM" id="SSF75412">
    <property type="entry name" value="Hypothetical protein MTH1880"/>
    <property type="match status" value="1"/>
</dbReference>
<name>Y858_METJA</name>
<keyword id="KW-1185">Reference proteome</keyword>
<proteinExistence type="predicted"/>
<reference key="1">
    <citation type="journal article" date="1996" name="Science">
        <title>Complete genome sequence of the methanogenic archaeon, Methanococcus jannaschii.</title>
        <authorList>
            <person name="Bult C.J."/>
            <person name="White O."/>
            <person name="Olsen G.J."/>
            <person name="Zhou L."/>
            <person name="Fleischmann R.D."/>
            <person name="Sutton G.G."/>
            <person name="Blake J.A."/>
            <person name="FitzGerald L.M."/>
            <person name="Clayton R.A."/>
            <person name="Gocayne J.D."/>
            <person name="Kerlavage A.R."/>
            <person name="Dougherty B.A."/>
            <person name="Tomb J.-F."/>
            <person name="Adams M.D."/>
            <person name="Reich C.I."/>
            <person name="Overbeek R."/>
            <person name="Kirkness E.F."/>
            <person name="Weinstock K.G."/>
            <person name="Merrick J.M."/>
            <person name="Glodek A."/>
            <person name="Scott J.L."/>
            <person name="Geoghagen N.S.M."/>
            <person name="Weidman J.F."/>
            <person name="Fuhrmann J.L."/>
            <person name="Nguyen D."/>
            <person name="Utterback T.R."/>
            <person name="Kelley J.M."/>
            <person name="Peterson J.D."/>
            <person name="Sadow P.W."/>
            <person name="Hanna M.C."/>
            <person name="Cotton M.D."/>
            <person name="Roberts K.M."/>
            <person name="Hurst M.A."/>
            <person name="Kaine B.P."/>
            <person name="Borodovsky M."/>
            <person name="Klenk H.-P."/>
            <person name="Fraser C.M."/>
            <person name="Smith H.O."/>
            <person name="Woese C.R."/>
            <person name="Venter J.C."/>
        </authorList>
    </citation>
    <scope>NUCLEOTIDE SEQUENCE [LARGE SCALE GENOMIC DNA]</scope>
    <source>
        <strain>ATCC 43067 / DSM 2661 / JAL-1 / JCM 10045 / NBRC 100440</strain>
    </source>
</reference>
<accession>Q58268</accession>